<accession>B5FPG3</accession>
<evidence type="ECO:0000255" key="1">
    <source>
        <dbReference type="HAMAP-Rule" id="MF_01350"/>
    </source>
</evidence>
<feature type="chain" id="PRO_1000143618" description="NADH-quinone oxidoreductase subunit H">
    <location>
        <begin position="1"/>
        <end position="325"/>
    </location>
</feature>
<feature type="transmembrane region" description="Helical" evidence="1">
    <location>
        <begin position="11"/>
        <end position="31"/>
    </location>
</feature>
<feature type="transmembrane region" description="Helical" evidence="1">
    <location>
        <begin position="50"/>
        <end position="69"/>
    </location>
</feature>
<feature type="transmembrane region" description="Helical" evidence="1">
    <location>
        <begin position="81"/>
        <end position="101"/>
    </location>
</feature>
<feature type="transmembrane region" description="Helical" evidence="1">
    <location>
        <begin position="114"/>
        <end position="134"/>
    </location>
</feature>
<feature type="transmembrane region" description="Helical" evidence="1">
    <location>
        <begin position="154"/>
        <end position="174"/>
    </location>
</feature>
<feature type="transmembrane region" description="Helical" evidence="1">
    <location>
        <begin position="186"/>
        <end position="206"/>
    </location>
</feature>
<feature type="transmembrane region" description="Helical" evidence="1">
    <location>
        <begin position="237"/>
        <end position="257"/>
    </location>
</feature>
<feature type="transmembrane region" description="Helical" evidence="1">
    <location>
        <begin position="265"/>
        <end position="285"/>
    </location>
</feature>
<feature type="transmembrane region" description="Helical" evidence="1">
    <location>
        <begin position="304"/>
        <end position="324"/>
    </location>
</feature>
<keyword id="KW-0997">Cell inner membrane</keyword>
<keyword id="KW-1003">Cell membrane</keyword>
<keyword id="KW-0472">Membrane</keyword>
<keyword id="KW-0520">NAD</keyword>
<keyword id="KW-0874">Quinone</keyword>
<keyword id="KW-1278">Translocase</keyword>
<keyword id="KW-0812">Transmembrane</keyword>
<keyword id="KW-1133">Transmembrane helix</keyword>
<keyword id="KW-0830">Ubiquinone</keyword>
<protein>
    <recommendedName>
        <fullName evidence="1">NADH-quinone oxidoreductase subunit H</fullName>
        <ecNumber evidence="1">7.1.1.-</ecNumber>
    </recommendedName>
    <alternativeName>
        <fullName evidence="1">NADH dehydrogenase I subunit H</fullName>
    </alternativeName>
    <alternativeName>
        <fullName evidence="1">NDH-1 subunit H</fullName>
    </alternativeName>
</protein>
<organism>
    <name type="scientific">Salmonella dublin (strain CT_02021853)</name>
    <dbReference type="NCBI Taxonomy" id="439851"/>
    <lineage>
        <taxon>Bacteria</taxon>
        <taxon>Pseudomonadati</taxon>
        <taxon>Pseudomonadota</taxon>
        <taxon>Gammaproteobacteria</taxon>
        <taxon>Enterobacterales</taxon>
        <taxon>Enterobacteriaceae</taxon>
        <taxon>Salmonella</taxon>
    </lineage>
</organism>
<sequence>MSWITPDLIEILLSILKAVVILLVVVTCGAFMSFGERRLLGLFQNRYGPNRVGWGGSLQLVADMIKMFFKEDWIPKFSDRVIFTLAPMIAFTSLLLSFAIVPVSPNWVVADLNIGILFFLMMAGLAVYAVLFAGWSSNNKYSLLGAMRASAQTVSYEVFLGLSLMGVVAQAGSFNMTDIVNNQAHLWNVIPQFFGFVTFAIAGVAVCHRHPFDQPEAEQELADGYHIEYSGMKFGLFFVGEYIGIVTVSALMVTLFFGGWHGPFLPPFVWFALKTAFFMMMFILIRASLPRPRYDQVMSFGWKVCLPLTLINLLVTAAVILWQAQ</sequence>
<proteinExistence type="inferred from homology"/>
<dbReference type="EC" id="7.1.1.-" evidence="1"/>
<dbReference type="EMBL" id="CP001144">
    <property type="protein sequence ID" value="ACH73754.1"/>
    <property type="molecule type" value="Genomic_DNA"/>
</dbReference>
<dbReference type="RefSeq" id="WP_000118515.1">
    <property type="nucleotide sequence ID" value="NC_011205.1"/>
</dbReference>
<dbReference type="SMR" id="B5FPG3"/>
<dbReference type="GeneID" id="66756771"/>
<dbReference type="KEGG" id="sed:SeD_A2668"/>
<dbReference type="HOGENOM" id="CLU_015134_0_1_6"/>
<dbReference type="Proteomes" id="UP000008322">
    <property type="component" value="Chromosome"/>
</dbReference>
<dbReference type="GO" id="GO:0005886">
    <property type="term" value="C:plasma membrane"/>
    <property type="evidence" value="ECO:0007669"/>
    <property type="project" value="UniProtKB-SubCell"/>
</dbReference>
<dbReference type="GO" id="GO:0003954">
    <property type="term" value="F:NADH dehydrogenase activity"/>
    <property type="evidence" value="ECO:0007669"/>
    <property type="project" value="TreeGrafter"/>
</dbReference>
<dbReference type="GO" id="GO:0016655">
    <property type="term" value="F:oxidoreductase activity, acting on NAD(P)H, quinone or similar compound as acceptor"/>
    <property type="evidence" value="ECO:0007669"/>
    <property type="project" value="UniProtKB-UniRule"/>
</dbReference>
<dbReference type="GO" id="GO:0048038">
    <property type="term" value="F:quinone binding"/>
    <property type="evidence" value="ECO:0007669"/>
    <property type="project" value="UniProtKB-KW"/>
</dbReference>
<dbReference type="GO" id="GO:0009060">
    <property type="term" value="P:aerobic respiration"/>
    <property type="evidence" value="ECO:0007669"/>
    <property type="project" value="TreeGrafter"/>
</dbReference>
<dbReference type="HAMAP" id="MF_01350">
    <property type="entry name" value="NDH1_NuoH"/>
    <property type="match status" value="1"/>
</dbReference>
<dbReference type="InterPro" id="IPR001694">
    <property type="entry name" value="NADH_UbQ_OxRdtase_su1/FPO"/>
</dbReference>
<dbReference type="InterPro" id="IPR018086">
    <property type="entry name" value="NADH_UbQ_OxRdtase_su1_CS"/>
</dbReference>
<dbReference type="NCBIfam" id="NF004740">
    <property type="entry name" value="PRK06076.1-1"/>
    <property type="match status" value="1"/>
</dbReference>
<dbReference type="NCBIfam" id="NF004741">
    <property type="entry name" value="PRK06076.1-2"/>
    <property type="match status" value="1"/>
</dbReference>
<dbReference type="PANTHER" id="PTHR11432">
    <property type="entry name" value="NADH DEHYDROGENASE SUBUNIT 1"/>
    <property type="match status" value="1"/>
</dbReference>
<dbReference type="PANTHER" id="PTHR11432:SF3">
    <property type="entry name" value="NADH-UBIQUINONE OXIDOREDUCTASE CHAIN 1"/>
    <property type="match status" value="1"/>
</dbReference>
<dbReference type="Pfam" id="PF00146">
    <property type="entry name" value="NADHdh"/>
    <property type="match status" value="1"/>
</dbReference>
<dbReference type="PROSITE" id="PS00667">
    <property type="entry name" value="COMPLEX1_ND1_1"/>
    <property type="match status" value="1"/>
</dbReference>
<dbReference type="PROSITE" id="PS00668">
    <property type="entry name" value="COMPLEX1_ND1_2"/>
    <property type="match status" value="1"/>
</dbReference>
<name>NUOH_SALDC</name>
<gene>
    <name evidence="1" type="primary">nuoH</name>
    <name type="ordered locus">SeD_A2668</name>
</gene>
<reference key="1">
    <citation type="journal article" date="2011" name="J. Bacteriol.">
        <title>Comparative genomics of 28 Salmonella enterica isolates: evidence for CRISPR-mediated adaptive sublineage evolution.</title>
        <authorList>
            <person name="Fricke W.F."/>
            <person name="Mammel M.K."/>
            <person name="McDermott P.F."/>
            <person name="Tartera C."/>
            <person name="White D.G."/>
            <person name="Leclerc J.E."/>
            <person name="Ravel J."/>
            <person name="Cebula T.A."/>
        </authorList>
    </citation>
    <scope>NUCLEOTIDE SEQUENCE [LARGE SCALE GENOMIC DNA]</scope>
    <source>
        <strain>CT_02021853</strain>
    </source>
</reference>
<comment type="function">
    <text evidence="1">NDH-1 shuttles electrons from NADH, via FMN and iron-sulfur (Fe-S) centers, to quinones in the respiratory chain. The immediate electron acceptor for the enzyme in this species is believed to be ubiquinone. Couples the redox reaction to proton translocation (for every two electrons transferred, four hydrogen ions are translocated across the cytoplasmic membrane), and thus conserves the redox energy in a proton gradient. This subunit may bind ubiquinone.</text>
</comment>
<comment type="catalytic activity">
    <reaction evidence="1">
        <text>a quinone + NADH + 5 H(+)(in) = a quinol + NAD(+) + 4 H(+)(out)</text>
        <dbReference type="Rhea" id="RHEA:57888"/>
        <dbReference type="ChEBI" id="CHEBI:15378"/>
        <dbReference type="ChEBI" id="CHEBI:24646"/>
        <dbReference type="ChEBI" id="CHEBI:57540"/>
        <dbReference type="ChEBI" id="CHEBI:57945"/>
        <dbReference type="ChEBI" id="CHEBI:132124"/>
    </reaction>
</comment>
<comment type="subunit">
    <text evidence="1">NDH-1 is composed of 13 different subunits. Subunits NuoA, H, J, K, L, M, N constitute the membrane sector of the complex.</text>
</comment>
<comment type="subcellular location">
    <subcellularLocation>
        <location evidence="1">Cell inner membrane</location>
        <topology evidence="1">Multi-pass membrane protein</topology>
    </subcellularLocation>
</comment>
<comment type="similarity">
    <text evidence="1">Belongs to the complex I subunit 1 family.</text>
</comment>